<sequence length="508" mass="55463">MMSEQGLVEIVQIAVADLNHEGHQTDVLENNEDSDQPGRKRARIEISQETSIKSMLISISQAICQRLDSMEAKLQVLEVTCRGLVEKLDTVMGKNQSTTQVPMVSGSPFGATQTCDKVRCVVPQTNVIVSGDRAKTEETSPRTSDSLENLLSNTVGRGRQKTIVLKVPVQEEIQDDQESGSETSDSVSNSGQPQNNNNVTLITLNSEEDYPTGTWLGDENNPEMRVRCPVSPADMLHISTNCRTAEKMALTLLDYLFHREVQAVSNLSGQGKHGKKQLDPLMIYGIRCHLFFKFAITESDWYRIKQSIDSKCRTAWRRKQRGQSLAVKSFSRRTPASQSSSDGVSAAETSAIETSTQQALHYALAGATQQVQIHRIGEDGQVQVIPQGHLHIAQVPQGEQVQITQDSEGNLQIHQVHVGQDGQVNVLRGPQLIAVASTDGTGGVDASPLQANDIQVQYVQLGTVTDHTGAVQAEALTPALQAEMDVKEAIQLQQAENGEVVQIQMPGT</sequence>
<organism>
    <name type="scientific">Danio rerio</name>
    <name type="common">Zebrafish</name>
    <name type="synonym">Brachydanio rerio</name>
    <dbReference type="NCBI Taxonomy" id="7955"/>
    <lineage>
        <taxon>Eukaryota</taxon>
        <taxon>Metazoa</taxon>
        <taxon>Chordata</taxon>
        <taxon>Craniata</taxon>
        <taxon>Vertebrata</taxon>
        <taxon>Euteleostomi</taxon>
        <taxon>Actinopterygii</taxon>
        <taxon>Neopterygii</taxon>
        <taxon>Teleostei</taxon>
        <taxon>Ostariophysi</taxon>
        <taxon>Cypriniformes</taxon>
        <taxon>Danionidae</taxon>
        <taxon>Danioninae</taxon>
        <taxon>Danio</taxon>
    </lineage>
</organism>
<accession>Q502P7</accession>
<evidence type="ECO:0000250" key="1"/>
<evidence type="ECO:0000250" key="2">
    <source>
        <dbReference type="UniProtKB" id="Q8VBU8"/>
    </source>
</evidence>
<evidence type="ECO:0000255" key="3"/>
<evidence type="ECO:0000255" key="4">
    <source>
        <dbReference type="PROSITE-ProRule" id="PRU00784"/>
    </source>
</evidence>
<evidence type="ECO:0000256" key="5">
    <source>
        <dbReference type="SAM" id="MobiDB-lite"/>
    </source>
</evidence>
<evidence type="ECO:0000305" key="6"/>
<proteinExistence type="evidence at transcript level"/>
<reference key="1">
    <citation type="submission" date="2005-05" db="EMBL/GenBank/DDBJ databases">
        <authorList>
            <consortium name="NIH - Zebrafish Gene Collection (ZGC) project"/>
        </authorList>
    </citation>
    <scope>NUCLEOTIDE SEQUENCE [LARGE SCALE MRNA]</scope>
    <source>
        <tissue>Ovary</tissue>
    </source>
</reference>
<keyword id="KW-0131">Cell cycle</keyword>
<keyword id="KW-0156">Chromatin regulator</keyword>
<keyword id="KW-0175">Coiled coil</keyword>
<keyword id="KW-0238">DNA-binding</keyword>
<keyword id="KW-0539">Nucleus</keyword>
<keyword id="KW-1185">Reference proteome</keyword>
<keyword id="KW-0678">Repressor</keyword>
<keyword id="KW-0804">Transcription</keyword>
<keyword id="KW-0805">Transcription regulation</keyword>
<protein>
    <recommendedName>
        <fullName>Protein BANP</fullName>
    </recommendedName>
</protein>
<gene>
    <name type="primary">banp</name>
    <name type="ORF">zgc:111954</name>
</gene>
<name>BANP_DANRE</name>
<comment type="function">
    <text evidence="1 2">DNA-binding protein which may repress cyclin D1 transcription by recruiting HDAC1 to its promoter, thereby diminishing H3K9ac, H3S10ph and H4K8ac levels. Promotes TP53 activation, which causes cell cycle arrest (By similarity).</text>
</comment>
<comment type="subcellular location">
    <subcellularLocation>
        <location evidence="1">Nucleus</location>
    </subcellularLocation>
</comment>
<comment type="similarity">
    <text evidence="6">Belongs to the BANP/SMAR1 family.</text>
</comment>
<dbReference type="EMBL" id="BC095613">
    <property type="protein sequence ID" value="AAH95613.1"/>
    <property type="molecule type" value="mRNA"/>
</dbReference>
<dbReference type="RefSeq" id="NP_001018468.1">
    <property type="nucleotide sequence ID" value="NM_001020632.1"/>
</dbReference>
<dbReference type="SMR" id="Q502P7"/>
<dbReference type="FunCoup" id="Q502P7">
    <property type="interactions" value="1416"/>
</dbReference>
<dbReference type="STRING" id="7955.ENSDARP00000023623"/>
<dbReference type="PaxDb" id="7955-ENSDARP00000023623"/>
<dbReference type="GeneID" id="553659"/>
<dbReference type="KEGG" id="dre:553659"/>
<dbReference type="AGR" id="ZFIN:ZDB-GENE-050522-54"/>
<dbReference type="CTD" id="54971"/>
<dbReference type="ZFIN" id="ZDB-GENE-050522-54">
    <property type="gene designation" value="banp"/>
</dbReference>
<dbReference type="eggNOG" id="ENOG502QRIF">
    <property type="taxonomic scope" value="Eukaryota"/>
</dbReference>
<dbReference type="InParanoid" id="Q502P7"/>
<dbReference type="OrthoDB" id="10052653at2759"/>
<dbReference type="PhylomeDB" id="Q502P7"/>
<dbReference type="Reactome" id="R-DRE-6804759">
    <property type="pathway name" value="Regulation of TP53 Activity through Association with Co-factors"/>
</dbReference>
<dbReference type="PRO" id="PR:Q502P7"/>
<dbReference type="Proteomes" id="UP000000437">
    <property type="component" value="Chromosome 25"/>
</dbReference>
<dbReference type="GO" id="GO:0005634">
    <property type="term" value="C:nucleus"/>
    <property type="evidence" value="ECO:0007669"/>
    <property type="project" value="UniProtKB-SubCell"/>
</dbReference>
<dbReference type="GO" id="GO:0003677">
    <property type="term" value="F:DNA binding"/>
    <property type="evidence" value="ECO:0007669"/>
    <property type="project" value="UniProtKB-KW"/>
</dbReference>
<dbReference type="GO" id="GO:0006325">
    <property type="term" value="P:chromatin organization"/>
    <property type="evidence" value="ECO:0007669"/>
    <property type="project" value="UniProtKB-KW"/>
</dbReference>
<dbReference type="GO" id="GO:0010564">
    <property type="term" value="P:regulation of cell cycle process"/>
    <property type="evidence" value="ECO:0000315"/>
    <property type="project" value="ZFIN"/>
</dbReference>
<dbReference type="FunFam" id="1.10.10.2590:FF:000001">
    <property type="entry name" value="protein BANP isoform X1"/>
    <property type="match status" value="1"/>
</dbReference>
<dbReference type="Gene3D" id="1.10.10.2590">
    <property type="entry name" value="BEN domain"/>
    <property type="match status" value="1"/>
</dbReference>
<dbReference type="InterPro" id="IPR042343">
    <property type="entry name" value="BANP"/>
</dbReference>
<dbReference type="InterPro" id="IPR018379">
    <property type="entry name" value="BEN_domain"/>
</dbReference>
<dbReference type="PANTHER" id="PTHR16243">
    <property type="entry name" value="BTG3-ASSOCIATED NUCLEAR PROTEIN BANP"/>
    <property type="match status" value="1"/>
</dbReference>
<dbReference type="PANTHER" id="PTHR16243:SF2">
    <property type="entry name" value="PROTEIN BANP"/>
    <property type="match status" value="1"/>
</dbReference>
<dbReference type="Pfam" id="PF10523">
    <property type="entry name" value="BEN"/>
    <property type="match status" value="1"/>
</dbReference>
<dbReference type="SMART" id="SM01025">
    <property type="entry name" value="BEN"/>
    <property type="match status" value="1"/>
</dbReference>
<dbReference type="PROSITE" id="PS51457">
    <property type="entry name" value="BEN"/>
    <property type="match status" value="1"/>
</dbReference>
<feature type="chain" id="PRO_0000297912" description="Protein BANP">
    <location>
        <begin position="1"/>
        <end position="508"/>
    </location>
</feature>
<feature type="domain" description="BEN" evidence="4">
    <location>
        <begin position="223"/>
        <end position="319"/>
    </location>
</feature>
<feature type="region of interest" description="Disordered" evidence="5">
    <location>
        <begin position="132"/>
        <end position="153"/>
    </location>
</feature>
<feature type="region of interest" description="Disordered" evidence="5">
    <location>
        <begin position="168"/>
        <end position="198"/>
    </location>
</feature>
<feature type="region of interest" description="Disordered" evidence="5">
    <location>
        <begin position="326"/>
        <end position="350"/>
    </location>
</feature>
<feature type="coiled-coil region" evidence="3">
    <location>
        <begin position="65"/>
        <end position="90"/>
    </location>
</feature>
<feature type="compositionally biased region" description="Polar residues" evidence="5">
    <location>
        <begin position="141"/>
        <end position="153"/>
    </location>
</feature>
<feature type="compositionally biased region" description="Polar residues" evidence="5">
    <location>
        <begin position="180"/>
        <end position="198"/>
    </location>
</feature>
<feature type="compositionally biased region" description="Polar residues" evidence="5">
    <location>
        <begin position="332"/>
        <end position="350"/>
    </location>
</feature>